<sequence length="348" mass="38675">MKKITLIRPDDWHCHLRDGSYLPRTVADIAAQFNRAIVMPNLVPPITTVQQAKAYYDRIKAHVPKSSNFEPLMTLYLTESTPQQEIKAAQQSGIIVACKLYPAGATTHSQAGVKDLKAIYTLLETMQSVDLPLLIHGEVVDYAVDIFDREAVFIERELLPLVETFPQLRIVFEHISTKIAVDFVLEAPSKLGATITPHHLLFNRNDLLSGSIRPHYYCLPILKTSEDQMALIQAATSGNPKFFLGTDSAPHSQTKKQSICGSAGIYNAPAAIALYAEIFASQNALDKLEGFASRFGAEFYGLPLNNSQITLIHQPWQVAESLPFGNELVVPLFAGQTLQWQIKSHEHK</sequence>
<gene>
    <name evidence="1" type="primary">pyrC</name>
    <name type="ordered locus">COXBURSA331_A1891</name>
</gene>
<proteinExistence type="inferred from homology"/>
<keyword id="KW-0378">Hydrolase</keyword>
<keyword id="KW-0479">Metal-binding</keyword>
<keyword id="KW-0665">Pyrimidine biosynthesis</keyword>
<keyword id="KW-0862">Zinc</keyword>
<evidence type="ECO:0000255" key="1">
    <source>
        <dbReference type="HAMAP-Rule" id="MF_00219"/>
    </source>
</evidence>
<dbReference type="EC" id="3.5.2.3" evidence="1"/>
<dbReference type="EMBL" id="CP000890">
    <property type="protein sequence ID" value="ABX77271.1"/>
    <property type="molecule type" value="Genomic_DNA"/>
</dbReference>
<dbReference type="SMR" id="A9NA67"/>
<dbReference type="MEROPS" id="M38.A02"/>
<dbReference type="KEGG" id="cbs:COXBURSA331_A1891"/>
<dbReference type="HOGENOM" id="CLU_041558_1_0_6"/>
<dbReference type="UniPathway" id="UPA00070">
    <property type="reaction ID" value="UER00117"/>
</dbReference>
<dbReference type="GO" id="GO:0005829">
    <property type="term" value="C:cytosol"/>
    <property type="evidence" value="ECO:0007669"/>
    <property type="project" value="TreeGrafter"/>
</dbReference>
<dbReference type="GO" id="GO:0004151">
    <property type="term" value="F:dihydroorotase activity"/>
    <property type="evidence" value="ECO:0007669"/>
    <property type="project" value="UniProtKB-UniRule"/>
</dbReference>
<dbReference type="GO" id="GO:0008270">
    <property type="term" value="F:zinc ion binding"/>
    <property type="evidence" value="ECO:0007669"/>
    <property type="project" value="UniProtKB-UniRule"/>
</dbReference>
<dbReference type="GO" id="GO:0006207">
    <property type="term" value="P:'de novo' pyrimidine nucleobase biosynthetic process"/>
    <property type="evidence" value="ECO:0007669"/>
    <property type="project" value="TreeGrafter"/>
</dbReference>
<dbReference type="GO" id="GO:0044205">
    <property type="term" value="P:'de novo' UMP biosynthetic process"/>
    <property type="evidence" value="ECO:0007669"/>
    <property type="project" value="UniProtKB-UniRule"/>
</dbReference>
<dbReference type="CDD" id="cd01294">
    <property type="entry name" value="DHOase"/>
    <property type="match status" value="1"/>
</dbReference>
<dbReference type="FunFam" id="3.20.20.140:FF:000006">
    <property type="entry name" value="Dihydroorotase"/>
    <property type="match status" value="1"/>
</dbReference>
<dbReference type="Gene3D" id="3.20.20.140">
    <property type="entry name" value="Metal-dependent hydrolases"/>
    <property type="match status" value="1"/>
</dbReference>
<dbReference type="HAMAP" id="MF_00219">
    <property type="entry name" value="PyrC_classII"/>
    <property type="match status" value="1"/>
</dbReference>
<dbReference type="InterPro" id="IPR004721">
    <property type="entry name" value="DHOdimr"/>
</dbReference>
<dbReference type="InterPro" id="IPR002195">
    <property type="entry name" value="Dihydroorotase_CS"/>
</dbReference>
<dbReference type="InterPro" id="IPR032466">
    <property type="entry name" value="Metal_Hydrolase"/>
</dbReference>
<dbReference type="NCBIfam" id="TIGR00856">
    <property type="entry name" value="pyrC_dimer"/>
    <property type="match status" value="1"/>
</dbReference>
<dbReference type="PANTHER" id="PTHR43137">
    <property type="entry name" value="DIHYDROOROTASE"/>
    <property type="match status" value="1"/>
</dbReference>
<dbReference type="PANTHER" id="PTHR43137:SF1">
    <property type="entry name" value="DIHYDROOROTASE"/>
    <property type="match status" value="1"/>
</dbReference>
<dbReference type="PIRSF" id="PIRSF001237">
    <property type="entry name" value="DHOdimr"/>
    <property type="match status" value="1"/>
</dbReference>
<dbReference type="SUPFAM" id="SSF51556">
    <property type="entry name" value="Metallo-dependent hydrolases"/>
    <property type="match status" value="1"/>
</dbReference>
<dbReference type="PROSITE" id="PS00483">
    <property type="entry name" value="DIHYDROOROTASE_2"/>
    <property type="match status" value="1"/>
</dbReference>
<reference key="1">
    <citation type="submission" date="2007-11" db="EMBL/GenBank/DDBJ databases">
        <title>Genome sequencing of phylogenetically and phenotypically diverse Coxiella burnetii isolates.</title>
        <authorList>
            <person name="Seshadri R."/>
            <person name="Samuel J.E."/>
        </authorList>
    </citation>
    <scope>NUCLEOTIDE SEQUENCE [LARGE SCALE GENOMIC DNA]</scope>
    <source>
        <strain>RSA 331 / Henzerling II</strain>
    </source>
</reference>
<feature type="chain" id="PRO_1000100038" description="Dihydroorotase">
    <location>
        <begin position="1"/>
        <end position="348"/>
    </location>
</feature>
<feature type="active site" evidence="1">
    <location>
        <position position="247"/>
    </location>
</feature>
<feature type="binding site" evidence="1">
    <location>
        <position position="13"/>
    </location>
    <ligand>
        <name>Zn(2+)</name>
        <dbReference type="ChEBI" id="CHEBI:29105"/>
        <label>1</label>
    </ligand>
</feature>
<feature type="binding site" evidence="1">
    <location>
        <begin position="15"/>
        <end position="17"/>
    </location>
    <ligand>
        <name>substrate</name>
    </ligand>
</feature>
<feature type="binding site" evidence="1">
    <location>
        <position position="15"/>
    </location>
    <ligand>
        <name>Zn(2+)</name>
        <dbReference type="ChEBI" id="CHEBI:29105"/>
        <label>1</label>
    </ligand>
</feature>
<feature type="binding site" evidence="1">
    <location>
        <position position="41"/>
    </location>
    <ligand>
        <name>substrate</name>
    </ligand>
</feature>
<feature type="binding site" description="via carbamate group" evidence="1">
    <location>
        <position position="99"/>
    </location>
    <ligand>
        <name>Zn(2+)</name>
        <dbReference type="ChEBI" id="CHEBI:29105"/>
        <label>1</label>
    </ligand>
</feature>
<feature type="binding site" description="via carbamate group" evidence="1">
    <location>
        <position position="99"/>
    </location>
    <ligand>
        <name>Zn(2+)</name>
        <dbReference type="ChEBI" id="CHEBI:29105"/>
        <label>2</label>
    </ligand>
</feature>
<feature type="binding site" evidence="1">
    <location>
        <position position="136"/>
    </location>
    <ligand>
        <name>substrate</name>
    </ligand>
</feature>
<feature type="binding site" evidence="1">
    <location>
        <position position="136"/>
    </location>
    <ligand>
        <name>Zn(2+)</name>
        <dbReference type="ChEBI" id="CHEBI:29105"/>
        <label>2</label>
    </ligand>
</feature>
<feature type="binding site" evidence="1">
    <location>
        <position position="174"/>
    </location>
    <ligand>
        <name>Zn(2+)</name>
        <dbReference type="ChEBI" id="CHEBI:29105"/>
        <label>2</label>
    </ligand>
</feature>
<feature type="binding site" evidence="1">
    <location>
        <position position="219"/>
    </location>
    <ligand>
        <name>substrate</name>
    </ligand>
</feature>
<feature type="binding site" evidence="1">
    <location>
        <position position="247"/>
    </location>
    <ligand>
        <name>Zn(2+)</name>
        <dbReference type="ChEBI" id="CHEBI:29105"/>
        <label>1</label>
    </ligand>
</feature>
<feature type="binding site" evidence="1">
    <location>
        <position position="251"/>
    </location>
    <ligand>
        <name>substrate</name>
    </ligand>
</feature>
<feature type="binding site" evidence="1">
    <location>
        <position position="263"/>
    </location>
    <ligand>
        <name>substrate</name>
    </ligand>
</feature>
<feature type="modified residue" description="N6-carboxylysine" evidence="1">
    <location>
        <position position="99"/>
    </location>
</feature>
<accession>A9NA67</accession>
<organism>
    <name type="scientific">Coxiella burnetii (strain RSA 331 / Henzerling II)</name>
    <dbReference type="NCBI Taxonomy" id="360115"/>
    <lineage>
        <taxon>Bacteria</taxon>
        <taxon>Pseudomonadati</taxon>
        <taxon>Pseudomonadota</taxon>
        <taxon>Gammaproteobacteria</taxon>
        <taxon>Legionellales</taxon>
        <taxon>Coxiellaceae</taxon>
        <taxon>Coxiella</taxon>
    </lineage>
</organism>
<name>PYRC_COXBR</name>
<comment type="function">
    <text evidence="1">Catalyzes the reversible cyclization of carbamoyl aspartate to dihydroorotate.</text>
</comment>
<comment type="catalytic activity">
    <reaction evidence="1">
        <text>(S)-dihydroorotate + H2O = N-carbamoyl-L-aspartate + H(+)</text>
        <dbReference type="Rhea" id="RHEA:24296"/>
        <dbReference type="ChEBI" id="CHEBI:15377"/>
        <dbReference type="ChEBI" id="CHEBI:15378"/>
        <dbReference type="ChEBI" id="CHEBI:30864"/>
        <dbReference type="ChEBI" id="CHEBI:32814"/>
        <dbReference type="EC" id="3.5.2.3"/>
    </reaction>
</comment>
<comment type="cofactor">
    <cofactor evidence="1">
        <name>Zn(2+)</name>
        <dbReference type="ChEBI" id="CHEBI:29105"/>
    </cofactor>
    <text evidence="1">Binds 2 Zn(2+) ions per subunit.</text>
</comment>
<comment type="pathway">
    <text evidence="1">Pyrimidine metabolism; UMP biosynthesis via de novo pathway; (S)-dihydroorotate from bicarbonate: step 3/3.</text>
</comment>
<comment type="subunit">
    <text evidence="1">Homodimer.</text>
</comment>
<comment type="similarity">
    <text evidence="1">Belongs to the metallo-dependent hydrolases superfamily. DHOase family. Class II DHOase subfamily.</text>
</comment>
<protein>
    <recommendedName>
        <fullName evidence="1">Dihydroorotase</fullName>
        <shortName evidence="1">DHOase</shortName>
        <ecNumber evidence="1">3.5.2.3</ecNumber>
    </recommendedName>
</protein>